<name>FLUC_META3</name>
<protein>
    <recommendedName>
        <fullName evidence="1">Fluoride-specific ion channel FluC</fullName>
    </recommendedName>
</protein>
<feature type="chain" id="PRO_1000026399" description="Fluoride-specific ion channel FluC">
    <location>
        <begin position="1"/>
        <end position="123"/>
    </location>
</feature>
<feature type="transmembrane region" description="Helical" evidence="1">
    <location>
        <begin position="5"/>
        <end position="25"/>
    </location>
</feature>
<feature type="transmembrane region" description="Helical" evidence="1">
    <location>
        <begin position="29"/>
        <end position="49"/>
    </location>
</feature>
<feature type="transmembrane region" description="Helical" evidence="1">
    <location>
        <begin position="65"/>
        <end position="85"/>
    </location>
</feature>
<feature type="transmembrane region" description="Helical" evidence="1">
    <location>
        <begin position="94"/>
        <end position="114"/>
    </location>
</feature>
<feature type="binding site" evidence="1">
    <location>
        <position position="72"/>
    </location>
    <ligand>
        <name>Na(+)</name>
        <dbReference type="ChEBI" id="CHEBI:29101"/>
        <note>structural</note>
    </ligand>
</feature>
<feature type="binding site" evidence="1">
    <location>
        <position position="75"/>
    </location>
    <ligand>
        <name>Na(+)</name>
        <dbReference type="ChEBI" id="CHEBI:29101"/>
        <note>structural</note>
    </ligand>
</feature>
<sequence>MKELLIIGIGGFIGAILRYVISGIIPAKFGIPTGTFIVNLIGSFIVGFVMYSSTVIDISPEYRLLIITGFCGALTTFSTFSYETFSLIENNEHIKFLTNIFINVMGCLIMIYVGRIMSLTILR</sequence>
<dbReference type="EMBL" id="CP000743">
    <property type="protein sequence ID" value="ABR56395.1"/>
    <property type="molecule type" value="Genomic_DNA"/>
</dbReference>
<dbReference type="RefSeq" id="WP_011973527.1">
    <property type="nucleotide sequence ID" value="NC_009635.1"/>
</dbReference>
<dbReference type="SMR" id="A6UV73"/>
<dbReference type="STRING" id="419665.Maeo_0812"/>
<dbReference type="GeneID" id="5326815"/>
<dbReference type="KEGG" id="mae:Maeo_0812"/>
<dbReference type="eggNOG" id="arCOG04701">
    <property type="taxonomic scope" value="Archaea"/>
</dbReference>
<dbReference type="HOGENOM" id="CLU_114342_3_0_2"/>
<dbReference type="OrthoDB" id="253428at2157"/>
<dbReference type="Proteomes" id="UP000001106">
    <property type="component" value="Chromosome"/>
</dbReference>
<dbReference type="GO" id="GO:0005886">
    <property type="term" value="C:plasma membrane"/>
    <property type="evidence" value="ECO:0007669"/>
    <property type="project" value="UniProtKB-SubCell"/>
</dbReference>
<dbReference type="GO" id="GO:0062054">
    <property type="term" value="F:fluoride channel activity"/>
    <property type="evidence" value="ECO:0007669"/>
    <property type="project" value="UniProtKB-UniRule"/>
</dbReference>
<dbReference type="GO" id="GO:0046872">
    <property type="term" value="F:metal ion binding"/>
    <property type="evidence" value="ECO:0007669"/>
    <property type="project" value="UniProtKB-KW"/>
</dbReference>
<dbReference type="GO" id="GO:0140114">
    <property type="term" value="P:cellular detoxification of fluoride"/>
    <property type="evidence" value="ECO:0007669"/>
    <property type="project" value="UniProtKB-UniRule"/>
</dbReference>
<dbReference type="HAMAP" id="MF_00454">
    <property type="entry name" value="FluC"/>
    <property type="match status" value="1"/>
</dbReference>
<dbReference type="InterPro" id="IPR003691">
    <property type="entry name" value="FluC"/>
</dbReference>
<dbReference type="NCBIfam" id="TIGR00494">
    <property type="entry name" value="crcB"/>
    <property type="match status" value="1"/>
</dbReference>
<dbReference type="PANTHER" id="PTHR28259">
    <property type="entry name" value="FLUORIDE EXPORT PROTEIN 1-RELATED"/>
    <property type="match status" value="1"/>
</dbReference>
<dbReference type="PANTHER" id="PTHR28259:SF1">
    <property type="entry name" value="FLUORIDE EXPORT PROTEIN 1-RELATED"/>
    <property type="match status" value="1"/>
</dbReference>
<dbReference type="Pfam" id="PF02537">
    <property type="entry name" value="CRCB"/>
    <property type="match status" value="1"/>
</dbReference>
<reference key="1">
    <citation type="submission" date="2007-06" db="EMBL/GenBank/DDBJ databases">
        <title>Complete sequence of Methanococcus aeolicus Nankai-3.</title>
        <authorList>
            <consortium name="US DOE Joint Genome Institute"/>
            <person name="Copeland A."/>
            <person name="Lucas S."/>
            <person name="Lapidus A."/>
            <person name="Barry K."/>
            <person name="Glavina del Rio T."/>
            <person name="Dalin E."/>
            <person name="Tice H."/>
            <person name="Pitluck S."/>
            <person name="Chain P."/>
            <person name="Malfatti S."/>
            <person name="Shin M."/>
            <person name="Vergez L."/>
            <person name="Schmutz J."/>
            <person name="Larimer F."/>
            <person name="Land M."/>
            <person name="Hauser L."/>
            <person name="Kyrpides N."/>
            <person name="Lykidis A."/>
            <person name="Sieprawska-Lupa M."/>
            <person name="Whitman W.B."/>
            <person name="Richardson P."/>
        </authorList>
    </citation>
    <scope>NUCLEOTIDE SEQUENCE [LARGE SCALE GENOMIC DNA]</scope>
    <source>
        <strain>ATCC BAA-1280 / DSM 17508 / OCM 812 / Nankai-3</strain>
    </source>
</reference>
<organism>
    <name type="scientific">Methanococcus aeolicus (strain ATCC BAA-1280 / DSM 17508 / OCM 812 / Nankai-3)</name>
    <dbReference type="NCBI Taxonomy" id="419665"/>
    <lineage>
        <taxon>Archaea</taxon>
        <taxon>Methanobacteriati</taxon>
        <taxon>Methanobacteriota</taxon>
        <taxon>Methanomada group</taxon>
        <taxon>Methanococci</taxon>
        <taxon>Methanococcales</taxon>
        <taxon>Methanococcaceae</taxon>
        <taxon>Methanococcus</taxon>
    </lineage>
</organism>
<keyword id="KW-1003">Cell membrane</keyword>
<keyword id="KW-0407">Ion channel</keyword>
<keyword id="KW-0406">Ion transport</keyword>
<keyword id="KW-0472">Membrane</keyword>
<keyword id="KW-0479">Metal-binding</keyword>
<keyword id="KW-0915">Sodium</keyword>
<keyword id="KW-0812">Transmembrane</keyword>
<keyword id="KW-1133">Transmembrane helix</keyword>
<keyword id="KW-0813">Transport</keyword>
<gene>
    <name evidence="1" type="primary">fluC</name>
    <name evidence="1" type="synonym">crcB</name>
    <name type="ordered locus">Maeo_0812</name>
</gene>
<evidence type="ECO:0000255" key="1">
    <source>
        <dbReference type="HAMAP-Rule" id="MF_00454"/>
    </source>
</evidence>
<proteinExistence type="inferred from homology"/>
<accession>A6UV73</accession>
<comment type="function">
    <text evidence="1">Fluoride-specific ion channel. Important for reducing fluoride concentration in the cell, thus reducing its toxicity.</text>
</comment>
<comment type="catalytic activity">
    <reaction evidence="1">
        <text>fluoride(in) = fluoride(out)</text>
        <dbReference type="Rhea" id="RHEA:76159"/>
        <dbReference type="ChEBI" id="CHEBI:17051"/>
    </reaction>
    <physiologicalReaction direction="left-to-right" evidence="1">
        <dbReference type="Rhea" id="RHEA:76160"/>
    </physiologicalReaction>
</comment>
<comment type="activity regulation">
    <text evidence="1">Na(+) is not transported, but it plays an essential structural role and its presence is essential for fluoride channel function.</text>
</comment>
<comment type="subcellular location">
    <subcellularLocation>
        <location evidence="1">Cell membrane</location>
        <topology evidence="1">Multi-pass membrane protein</topology>
    </subcellularLocation>
</comment>
<comment type="similarity">
    <text evidence="1">Belongs to the fluoride channel Fluc/FEX (TC 1.A.43) family.</text>
</comment>